<sequence>MEDLEEGTGEGCSGWFDREAICSDGSSDEEPNESFESIADMFDDGTQTQGNSLELFHTQEKEETRTQIQALKRKYIPSPEAGGDLSPRLRAISITPKKKKPSRRLFETPEDSGNGSLGNETTDTSSGFQVVGDSAVDVCDAGRLLNLNLLQSHNRVARLLAVFKEAYGVSYKELTREYKSDKTCNPDWVIALYSLSEPILNAARTTLQGICEYVFMQSRPTAAATVALLTVRFKCSKSRETVRKQMCGMFHSDPLLCLCDPPKVQSVPAALYWYKSSMYSGTFTHGEAPEWIKRQTMITCAMEETKFDLSEMVQWAYDNNYEDESQIAFEYARTATESPNANAWLASNAQAKHVRDCATMVRHYKRAEMKAMSMSQWVWKCCREEPEEGTWTPISLYLASEGVEVIRFLSAMKSWLRGIPKKNCLVFYGPPNTGKSLFTMSLIKFLRGRVISFANSKSHFWMQPLAEAKVVLLDDATRATWDYVDTYMRNAMDGNPLSIDCKYRTPVQVKCPPMLVTTNEDVHLNDRWRYLHSRIQVFHLKEPMPIDTAGNPEYSFSNRHWKAFFEKLQKPLDLSEDEGDPKDNGEHTQPFSCCARGTDVHV</sequence>
<organism>
    <name type="scientific">Mastomys natalensis papillomavirus (isolate African multimammate rat)</name>
    <name type="common">MnPV</name>
    <dbReference type="NCBI Taxonomy" id="654915"/>
    <lineage>
        <taxon>Viruses</taxon>
        <taxon>Monodnaviria</taxon>
        <taxon>Shotokuvirae</taxon>
        <taxon>Cossaviricota</taxon>
        <taxon>Papovaviricetes</taxon>
        <taxon>Zurhausenvirales</taxon>
        <taxon>Papillomaviridae</taxon>
        <taxon>Firstpapillomavirinae</taxon>
        <taxon>Iotapapillomavirus</taxon>
        <taxon>Mastomys natalensis papillomavirus</taxon>
    </lineage>
</organism>
<comment type="function">
    <text evidence="1">ATP-dependent DNA 3'-5' helicase required for initiation of viral DNA replication. It forms a complex with the viral E2 protein. The E1-E2 complex binds to the replication origin which contains binding sites for both proteins. During the initial step, a dimer of E1 interacts with a dimer of protein E2 leading to a complex that binds the viral origin of replication with high specificity. Then, a second dimer of E1 displaces the E2 dimer in an ATP-dependent manner to form the E1 tetramer. Following this, two E1 monomers are added to each half of the site, which results in the formation of two E1 trimers on the viral ori. Subsequently, two hexamers will be created. The double hexamer acts as a bi-directional helicase machinery and unwinds the viral DNA and then recruits the host DNA polymerase to start replication.</text>
</comment>
<comment type="catalytic activity">
    <reaction evidence="1">
        <text>Couples ATP hydrolysis with the unwinding of duplex DNA by translocating in the 3'-5' direction.</text>
        <dbReference type="EC" id="5.6.2.4"/>
    </reaction>
</comment>
<comment type="catalytic activity">
    <reaction evidence="1">
        <text>ATP + H2O = ADP + phosphate + H(+)</text>
        <dbReference type="Rhea" id="RHEA:13065"/>
        <dbReference type="ChEBI" id="CHEBI:15377"/>
        <dbReference type="ChEBI" id="CHEBI:15378"/>
        <dbReference type="ChEBI" id="CHEBI:30616"/>
        <dbReference type="ChEBI" id="CHEBI:43474"/>
        <dbReference type="ChEBI" id="CHEBI:456216"/>
        <dbReference type="EC" id="5.6.2.4"/>
    </reaction>
</comment>
<comment type="subunit">
    <text evidence="1">Can form hexamers. Interacts with E2 protein; this interaction increases E1 DNA binding specificity. Interacts with host DNA polymerase subunit POLA2. Interacts with host single stranded DNA-binding protein RPA1. Interacts with host TOP1; this interaction stimulates the enzymatic activity of TOP1.</text>
</comment>
<comment type="subcellular location">
    <subcellularLocation>
        <location evidence="1">Host nucleus</location>
    </subcellularLocation>
</comment>
<comment type="PTM">
    <text evidence="1">Phosphorylated.</text>
</comment>
<comment type="PTM">
    <text evidence="1">Sumoylated.</text>
</comment>
<comment type="similarity">
    <text evidence="1">Belongs to the papillomaviridae E1 protein family.</text>
</comment>
<reference key="1">
    <citation type="journal article" date="1994" name="Virology">
        <title>The Mastomys natalensis papillomavirus: nucleotide sequence, genome organization, and phylogenetic relationship of a rodent papillomavirus involved in tumorigenesis of cutaneous epithelia.</title>
        <authorList>
            <person name="Tan C.-H."/>
            <person name="Tachezy R."/>
            <person name="van Ranst M."/>
            <person name="Chan S.-Y."/>
            <person name="Bernard H.-U."/>
            <person name="Burk R.D."/>
        </authorList>
    </citation>
    <scope>NUCLEOTIDE SEQUENCE [GENOMIC DNA]</scope>
</reference>
<feature type="chain" id="PRO_0000133168" description="Replication protein E1">
    <location>
        <begin position="1"/>
        <end position="602"/>
    </location>
</feature>
<feature type="domain" description="SF3 helicase" evidence="1">
    <location>
        <begin position="403"/>
        <end position="553"/>
    </location>
</feature>
<feature type="region of interest" description="Disordered" evidence="2">
    <location>
        <begin position="1"/>
        <end position="66"/>
    </location>
</feature>
<feature type="region of interest" description="Disordered" evidence="2">
    <location>
        <begin position="78"/>
        <end position="126"/>
    </location>
</feature>
<feature type="region of interest" description="DNA-binding region" evidence="1">
    <location>
        <begin position="138"/>
        <end position="304"/>
    </location>
</feature>
<feature type="region of interest" description="Disordered" evidence="2">
    <location>
        <begin position="573"/>
        <end position="602"/>
    </location>
</feature>
<feature type="short sequence motif" description="Nuclear localization signal" evidence="1">
    <location>
        <begin position="72"/>
        <end position="74"/>
    </location>
</feature>
<feature type="short sequence motif" description="Nuclear export signal" evidence="1">
    <location>
        <begin position="85"/>
        <end position="94"/>
    </location>
</feature>
<feature type="compositionally biased region" description="Polar residues" evidence="2">
    <location>
        <begin position="111"/>
        <end position="126"/>
    </location>
</feature>
<feature type="binding site" evidence="1">
    <location>
        <begin position="429"/>
        <end position="436"/>
    </location>
    <ligand>
        <name>ATP</name>
        <dbReference type="ChEBI" id="CHEBI:30616"/>
    </ligand>
</feature>
<feature type="modified residue" description="Phosphoserine; by host" evidence="1">
    <location>
        <position position="78"/>
    </location>
</feature>
<feature type="modified residue" description="Phosphoserine; by host" evidence="1">
    <location>
        <position position="86"/>
    </location>
</feature>
<feature type="cross-link" description="Glycyl lysine isopeptide (Lys-Gly) (interchain with G-Cter in SUMO)" evidence="1">
    <location>
        <position position="510"/>
    </location>
</feature>
<dbReference type="EC" id="5.6.2.4" evidence="1"/>
<dbReference type="EMBL" id="U01834">
    <property type="protein sequence ID" value="AAA67146.1"/>
    <property type="molecule type" value="Genomic_DNA"/>
</dbReference>
<dbReference type="RefSeq" id="NP_042016.1">
    <property type="nucleotide sequence ID" value="NC_001605.1"/>
</dbReference>
<dbReference type="SMR" id="Q84356"/>
<dbReference type="GeneID" id="1489000"/>
<dbReference type="KEGG" id="vg:1489000"/>
<dbReference type="Proteomes" id="UP000007018">
    <property type="component" value="Segment"/>
</dbReference>
<dbReference type="GO" id="GO:0042025">
    <property type="term" value="C:host cell nucleus"/>
    <property type="evidence" value="ECO:0007669"/>
    <property type="project" value="UniProtKB-SubCell"/>
</dbReference>
<dbReference type="GO" id="GO:0005524">
    <property type="term" value="F:ATP binding"/>
    <property type="evidence" value="ECO:0007669"/>
    <property type="project" value="UniProtKB-UniRule"/>
</dbReference>
<dbReference type="GO" id="GO:0016887">
    <property type="term" value="F:ATP hydrolysis activity"/>
    <property type="evidence" value="ECO:0007669"/>
    <property type="project" value="RHEA"/>
</dbReference>
<dbReference type="GO" id="GO:0003677">
    <property type="term" value="F:DNA binding"/>
    <property type="evidence" value="ECO:0007669"/>
    <property type="project" value="UniProtKB-UniRule"/>
</dbReference>
<dbReference type="GO" id="GO:0003678">
    <property type="term" value="F:DNA helicase activity"/>
    <property type="evidence" value="ECO:0007669"/>
    <property type="project" value="UniProtKB-UniRule"/>
</dbReference>
<dbReference type="GO" id="GO:0006260">
    <property type="term" value="P:DNA replication"/>
    <property type="evidence" value="ECO:0007669"/>
    <property type="project" value="UniProtKB-UniRule"/>
</dbReference>
<dbReference type="Gene3D" id="3.40.1310.10">
    <property type="match status" value="1"/>
</dbReference>
<dbReference type="Gene3D" id="3.40.50.300">
    <property type="entry name" value="P-loop containing nucleotide triphosphate hydrolases"/>
    <property type="match status" value="1"/>
</dbReference>
<dbReference type="Gene3D" id="1.10.10.510">
    <property type="entry name" value="Zinc finger, large T-antigen D1 domain"/>
    <property type="match status" value="1"/>
</dbReference>
<dbReference type="HAMAP" id="MF_04000">
    <property type="entry name" value="PPV_E1"/>
    <property type="match status" value="1"/>
</dbReference>
<dbReference type="InterPro" id="IPR014015">
    <property type="entry name" value="Helicase_SF3_DNA-vir"/>
</dbReference>
<dbReference type="InterPro" id="IPR027417">
    <property type="entry name" value="P-loop_NTPase"/>
</dbReference>
<dbReference type="InterPro" id="IPR001177">
    <property type="entry name" value="PPV_DNA_helicase_E1_C"/>
</dbReference>
<dbReference type="InterPro" id="IPR014000">
    <property type="entry name" value="PPV_DNA_helicase_E1_N"/>
</dbReference>
<dbReference type="InterPro" id="IPR046832">
    <property type="entry name" value="PPV_E1_DBD"/>
</dbReference>
<dbReference type="InterPro" id="IPR046935">
    <property type="entry name" value="PPV_E1_DBD_sf"/>
</dbReference>
<dbReference type="InterPro" id="IPR016393">
    <property type="entry name" value="Rep_E1_papillomaV"/>
</dbReference>
<dbReference type="InterPro" id="IPR037102">
    <property type="entry name" value="Znf_lg_T-Ag_D1_dom_sf"/>
</dbReference>
<dbReference type="Pfam" id="PF00519">
    <property type="entry name" value="PPV_E1_C"/>
    <property type="match status" value="1"/>
</dbReference>
<dbReference type="Pfam" id="PF20450">
    <property type="entry name" value="PPV_E1_DBD"/>
    <property type="match status" value="1"/>
</dbReference>
<dbReference type="Pfam" id="PF00524">
    <property type="entry name" value="PPV_E1_N"/>
    <property type="match status" value="1"/>
</dbReference>
<dbReference type="PIRSF" id="PIRSF003383">
    <property type="entry name" value="Rep_E1_papillomaV"/>
    <property type="match status" value="1"/>
</dbReference>
<dbReference type="SUPFAM" id="SSF55464">
    <property type="entry name" value="Origin of replication-binding domain, RBD-like"/>
    <property type="match status" value="1"/>
</dbReference>
<dbReference type="SUPFAM" id="SSF52540">
    <property type="entry name" value="P-loop containing nucleoside triphosphate hydrolases"/>
    <property type="match status" value="1"/>
</dbReference>
<dbReference type="PROSITE" id="PS51206">
    <property type="entry name" value="SF3_HELICASE_1"/>
    <property type="match status" value="1"/>
</dbReference>
<name>VE1_MNPVA</name>
<accession>Q84356</accession>
<protein>
    <recommendedName>
        <fullName evidence="1">Replication protein E1</fullName>
        <ecNumber evidence="1">5.6.2.4</ecNumber>
    </recommendedName>
    <alternativeName>
        <fullName evidence="1">ATP-dependent helicase E1</fullName>
    </alternativeName>
    <alternativeName>
        <fullName evidence="1">DNA 3'-5' helicase E1</fullName>
    </alternativeName>
</protein>
<keyword id="KW-0067">ATP-binding</keyword>
<keyword id="KW-0235">DNA replication</keyword>
<keyword id="KW-0238">DNA-binding</keyword>
<keyword id="KW-0244">Early protein</keyword>
<keyword id="KW-0347">Helicase</keyword>
<keyword id="KW-1048">Host nucleus</keyword>
<keyword id="KW-0378">Hydrolase</keyword>
<keyword id="KW-0413">Isomerase</keyword>
<keyword id="KW-1017">Isopeptide bond</keyword>
<keyword id="KW-0547">Nucleotide-binding</keyword>
<keyword id="KW-0597">Phosphoprotein</keyword>
<keyword id="KW-1185">Reference proteome</keyword>
<keyword id="KW-0832">Ubl conjugation</keyword>
<evidence type="ECO:0000255" key="1">
    <source>
        <dbReference type="HAMAP-Rule" id="MF_04000"/>
    </source>
</evidence>
<evidence type="ECO:0000256" key="2">
    <source>
        <dbReference type="SAM" id="MobiDB-lite"/>
    </source>
</evidence>
<organismHost>
    <name type="scientific">Mastomys natalensis</name>
    <name type="common">African soft-furred rat</name>
    <name type="synonym">Praomys natalensis</name>
    <dbReference type="NCBI Taxonomy" id="10112"/>
</organismHost>
<proteinExistence type="inferred from homology"/>
<gene>
    <name evidence="1" type="primary">E1</name>
</gene>